<gene>
    <name evidence="34" type="primary">Src</name>
</gene>
<organism>
    <name type="scientific">Mus musculus</name>
    <name type="common">Mouse</name>
    <dbReference type="NCBI Taxonomy" id="10090"/>
    <lineage>
        <taxon>Eukaryota</taxon>
        <taxon>Metazoa</taxon>
        <taxon>Chordata</taxon>
        <taxon>Craniata</taxon>
        <taxon>Vertebrata</taxon>
        <taxon>Euteleostomi</taxon>
        <taxon>Mammalia</taxon>
        <taxon>Eutheria</taxon>
        <taxon>Euarchontoglires</taxon>
        <taxon>Glires</taxon>
        <taxon>Rodentia</taxon>
        <taxon>Myomorpha</taxon>
        <taxon>Muroidea</taxon>
        <taxon>Muridae</taxon>
        <taxon>Murinae</taxon>
        <taxon>Mus</taxon>
        <taxon>Mus</taxon>
    </lineage>
</organism>
<accession>P05480</accession>
<accession>F8WI90</accession>
<accession>Q2M4I4</accession>
<name>SRC_MOUSE</name>
<reference key="1">
    <citation type="journal article" date="1987" name="Science">
        <title>Neuronal pp60c-src contains a six-amino acid insertion relative to its non-neuronal counterpart.</title>
        <authorList>
            <person name="Martinez R."/>
            <person name="Mathey-Prevot B."/>
            <person name="Bernards A."/>
            <person name="Baltimore D."/>
        </authorList>
    </citation>
    <scope>NUCLEOTIDE SEQUENCE [MRNA] (ISOFORM 2)</scope>
    <source>
        <strain>BALB/cJ</strain>
    </source>
</reference>
<reference key="2">
    <citation type="submission" date="2005-01" db="EMBL/GenBank/DDBJ databases">
        <title>Characterization of quantitative trait loci influencing growth and adiposity using congenic mouse strains.</title>
        <authorList>
            <person name="Farber C.R."/>
            <person name="Corva P.M."/>
            <person name="Medrano J.F."/>
        </authorList>
    </citation>
    <scope>NUCLEOTIDE SEQUENCE [GENOMIC DNA] (ISOFORM 2)</scope>
    <source>
        <strain>CAST/EiJ</strain>
        <tissue>Brain</tissue>
    </source>
</reference>
<reference key="3">
    <citation type="journal article" date="2009" name="PLoS Biol.">
        <title>Lineage-specific biology revealed by a finished genome assembly of the mouse.</title>
        <authorList>
            <person name="Church D.M."/>
            <person name="Goodstadt L."/>
            <person name="Hillier L.W."/>
            <person name="Zody M.C."/>
            <person name="Goldstein S."/>
            <person name="She X."/>
            <person name="Bult C.J."/>
            <person name="Agarwala R."/>
            <person name="Cherry J.L."/>
            <person name="DiCuccio M."/>
            <person name="Hlavina W."/>
            <person name="Kapustin Y."/>
            <person name="Meric P."/>
            <person name="Maglott D."/>
            <person name="Birtle Z."/>
            <person name="Marques A.C."/>
            <person name="Graves T."/>
            <person name="Zhou S."/>
            <person name="Teague B."/>
            <person name="Potamousis K."/>
            <person name="Churas C."/>
            <person name="Place M."/>
            <person name="Herschleb J."/>
            <person name="Runnheim R."/>
            <person name="Forrest D."/>
            <person name="Amos-Landgraf J."/>
            <person name="Schwartz D.C."/>
            <person name="Cheng Z."/>
            <person name="Lindblad-Toh K."/>
            <person name="Eichler E.E."/>
            <person name="Ponting C.P."/>
        </authorList>
    </citation>
    <scope>NUCLEOTIDE SEQUENCE [LARGE SCALE GENOMIC DNA]</scope>
    <source>
        <strain>C57BL/6J</strain>
    </source>
</reference>
<reference key="4">
    <citation type="submission" date="2005-07" db="EMBL/GenBank/DDBJ databases">
        <authorList>
            <person name="Mural R.J."/>
            <person name="Adams M.D."/>
            <person name="Myers E.W."/>
            <person name="Smith H.O."/>
            <person name="Venter J.C."/>
        </authorList>
    </citation>
    <scope>NUCLEOTIDE SEQUENCE [LARGE SCALE GENOMIC DNA]</scope>
</reference>
<reference key="5">
    <citation type="journal article" date="1993" name="EMBO J.">
        <title>Activation of Src family kinases by colony stimulating factor-1, and their association with its receptor.</title>
        <authorList>
            <person name="Courtneidge S.A."/>
            <person name="Dhand R."/>
            <person name="Pilat D."/>
            <person name="Twamley G.M."/>
            <person name="Waterfield M.D."/>
            <person name="Roussel M.F."/>
        </authorList>
    </citation>
    <scope>INTERACTION WITH CSF1R</scope>
</reference>
<reference key="6">
    <citation type="journal article" date="1995" name="Oncogene">
        <title>Direct and specific interaction of c-Src with Neu is involved in signaling by the epidermal growth factor receptor.</title>
        <authorList>
            <person name="Muthuswamy S.K."/>
            <person name="Muller W.J."/>
        </authorList>
    </citation>
    <scope>INTERACTION WITH ERBB2</scope>
</reference>
<reference key="7">
    <citation type="journal article" date="1996" name="Exp. Hematol.">
        <title>Activation of Src-family protein tyrosine kinases and phosphatidylinositol 3-kinase in 3T3-L1 mouse preadipocytes by interleukin-11.</title>
        <authorList>
            <person name="Fuhrer D.K."/>
            <person name="Yang Y.C."/>
        </authorList>
    </citation>
    <scope>FUNCTION IN IL11-SIGNALING</scope>
</reference>
<reference key="8">
    <citation type="journal article" date="1996" name="J. Biol. Chem.">
        <title>Bombesin, bradykinin, vasopressin, and phorbol esters rapidly and transiently activate Src family tyrosine kinases in Swiss 3T3 cells. Dissociation from tyrosine phosphorylation of p125 focal adhesion kinase.</title>
        <authorList>
            <person name="Rodriguez-Fernandez J.L."/>
            <person name="Rozengurt E."/>
        </authorList>
    </citation>
    <scope>CATALYTIC ACTIVITY</scope>
    <scope>ACTIVITY REGULATION</scope>
</reference>
<reference key="9">
    <citation type="journal article" date="1997" name="Biochem. Biophys. Res. Commun.">
        <title>c-Src activates both STAT1 and STAT3 in PDGF-stimulated NIH3T3 cells.</title>
        <authorList>
            <person name="Cirri P."/>
            <person name="Chiarugi P."/>
            <person name="Marra F."/>
            <person name="Raugei G."/>
            <person name="Camici G."/>
            <person name="Manao G."/>
            <person name="Ramponi G."/>
        </authorList>
    </citation>
    <scope>FUNCTION</scope>
    <scope>INTERACTION WITH STAT1</scope>
</reference>
<reference key="10">
    <citation type="journal article" date="1998" name="Mol. Cell. Biol.">
        <title>ASAP1, a phospholipid-dependent arf GTPase-activating protein that associates with and is phosphorylated by Src.</title>
        <authorList>
            <person name="Brown M.T."/>
            <person name="Andrade J."/>
            <person name="Radhakrishna H."/>
            <person name="Donaldson J.G."/>
            <person name="Cooper J.A."/>
            <person name="Randazzo P.A."/>
        </authorList>
    </citation>
    <scope>INTERACTION WITH DDEF1/ASAP1</scope>
</reference>
<reference key="11">
    <citation type="journal article" date="2001" name="Nat. Cell Biol.">
        <title>N-CAM modulates tumour-cell adhesion to matrix by inducing FGF-receptor signalling.</title>
        <authorList>
            <person name="Cavallaro U."/>
            <person name="Niedermeyer J."/>
            <person name="Fuxa M."/>
            <person name="Christofori G."/>
        </authorList>
    </citation>
    <scope>IDENTIFICATION IN A COMPLEX WITH NCAM1; CDH2; PLCG1; FRS2; FGFR4; SHC1; GAP43 AND CTTN</scope>
</reference>
<reference key="12">
    <citation type="journal article" date="2003" name="Exp. Cell Res.">
        <title>The role of c-Src in platelet-derived growth factor alpha receptor internalization.</title>
        <authorList>
            <person name="Avrov K."/>
            <person name="Kazlauskas A."/>
        </authorList>
    </citation>
    <scope>INTERACTION WITH PDGFRA</scope>
</reference>
<reference key="13">
    <citation type="journal article" date="2003" name="J. Cell Biol.">
        <title>Regulation of cytochrome c oxidase activity by c-Src in osteoclasts.</title>
        <authorList>
            <person name="Miyazaki T."/>
            <person name="Neff L."/>
            <person name="Tanaka S."/>
            <person name="Horne W.C."/>
            <person name="Baron R."/>
        </authorList>
    </citation>
    <scope>FUNCTION</scope>
    <scope>SUBCELLULAR LOCATION</scope>
</reference>
<reference key="14">
    <citation type="journal article" date="2003" name="J. Cell Biol.">
        <title>EphB1 recruits c-Src and p52Shc to activate MAPK/ERK and promote chemotaxis.</title>
        <authorList>
            <person name="Vindis C."/>
            <person name="Cerretti D.P."/>
            <person name="Daniel T.O."/>
            <person name="Huynh-Do U."/>
        </authorList>
    </citation>
    <scope>INTERACTION WITH EPHB1</scope>
</reference>
<reference key="15">
    <citation type="journal article" date="2004" name="J. Biol. Chem.">
        <title>Src kinase activity is essential for osteoclast function.</title>
        <authorList>
            <person name="Miyazaki T."/>
            <person name="Sanjay A."/>
            <person name="Neff L."/>
            <person name="Tanaka S."/>
            <person name="Horne W.C."/>
            <person name="Baron R."/>
        </authorList>
    </citation>
    <scope>FUNCTION</scope>
    <scope>INTERACTION WITH PTK2B/PYK2</scope>
</reference>
<reference key="16">
    <citation type="journal article" date="2006" name="Blood">
        <title>Identification of Y589 and Y599 in the juxtamembrane domain of Flt3 as ligand-induced autophosphorylation sites involved in binding of Src family kinases and the protein tyrosine phosphatase SHP2.</title>
        <authorList>
            <person name="Heiss E."/>
            <person name="Masson K."/>
            <person name="Sundberg C."/>
            <person name="Pedersen M."/>
            <person name="Sun J."/>
            <person name="Bengtsson S."/>
            <person name="Ronnstrand L."/>
        </authorList>
    </citation>
    <scope>INTERACTION WITH FLT3</scope>
</reference>
<reference key="17">
    <citation type="journal article" date="2006" name="Mol. Cell. Biol.">
        <title>Ccpg1, a novel scaffold protein that regulates the activity of the Rho guanine nucleotide exchange factor Dbs.</title>
        <authorList>
            <person name="Kostenko E.V."/>
            <person name="Olabisi O.O."/>
            <person name="Sahay S."/>
            <person name="Rodriguez P.L."/>
            <person name="Whitehead I.P."/>
        </authorList>
    </citation>
    <scope>INTERACTION WITH CCPG1</scope>
</reference>
<reference key="18">
    <citation type="journal article" date="2008" name="J. Proteome Res.">
        <title>Large-scale identification and evolution indexing of tyrosine phosphorylation sites from murine brain.</title>
        <authorList>
            <person name="Ballif B.A."/>
            <person name="Carey G.R."/>
            <person name="Sunyaev S.R."/>
            <person name="Gygi S.P."/>
        </authorList>
    </citation>
    <scope>PHOSPHORYLATION [LARGE SCALE ANALYSIS] AT TYR-186</scope>
    <scope>IDENTIFICATION BY MASS SPECTROMETRY [LARGE SCALE ANALYSIS]</scope>
    <source>
        <tissue>Brain</tissue>
    </source>
</reference>
<reference key="19">
    <citation type="journal article" date="2009" name="Immunity">
        <title>The phagosomal proteome in interferon-gamma-activated macrophages.</title>
        <authorList>
            <person name="Trost M."/>
            <person name="English L."/>
            <person name="Lemieux S."/>
            <person name="Courcelles M."/>
            <person name="Desjardins M."/>
            <person name="Thibault P."/>
        </authorList>
    </citation>
    <scope>IDENTIFICATION BY MASS SPECTROMETRY [LARGE SCALE ANALYSIS]</scope>
</reference>
<reference key="20">
    <citation type="journal article" date="2009" name="Nature">
        <title>Deficiency of a beta-arrestin-2 signal complex contributes to insulin resistance.</title>
        <authorList>
            <person name="Luan B."/>
            <person name="Zhao J."/>
            <person name="Wu H."/>
            <person name="Duan B."/>
            <person name="Shu G."/>
            <person name="Wang X."/>
            <person name="Li D."/>
            <person name="Jia W."/>
            <person name="Kang J."/>
            <person name="Pei G."/>
        </authorList>
    </citation>
    <scope>INTERACTION WITH ARRB2</scope>
</reference>
<reference key="21">
    <citation type="journal article" date="2010" name="Cell">
        <title>A tissue-specific atlas of mouse protein phosphorylation and expression.</title>
        <authorList>
            <person name="Huttlin E.L."/>
            <person name="Jedrychowski M.P."/>
            <person name="Elias J.E."/>
            <person name="Goswami T."/>
            <person name="Rad R."/>
            <person name="Beausoleil S.A."/>
            <person name="Villen J."/>
            <person name="Haas W."/>
            <person name="Sowa M.E."/>
            <person name="Gygi S.P."/>
        </authorList>
    </citation>
    <scope>PHOSPHORYLATION [LARGE SCALE ANALYSIS] AT SER-17; SER-21 AND SER-74</scope>
    <scope>IDENTIFICATION BY MASS SPECTROMETRY [LARGE SCALE ANALYSIS]</scope>
    <source>
        <tissue>Brain</tissue>
        <tissue>Heart</tissue>
        <tissue>Kidney</tissue>
        <tissue>Lung</tissue>
        <tissue>Spleen</tissue>
        <tissue>Testis</tissue>
    </source>
</reference>
<reference key="22">
    <citation type="journal article" date="2011" name="Cardiovasc. Pathol.">
        <title>Collagen stimulates discoidin domain receptor 1-mediated migration of smooth muscle cells through Src.</title>
        <authorList>
            <person name="Lu K.K."/>
            <person name="Trcka D."/>
            <person name="Bendeck M.P."/>
        </authorList>
    </citation>
    <scope>INTERACTION WITH DDR1</scope>
</reference>
<reference key="23">
    <citation type="journal article" date="2011" name="J. Cell Sci.">
        <title>The guanine nucleotide exchange factor Arhgef5 plays crucial roles in Src-induced podosome formation.</title>
        <authorList>
            <person name="Kuroiwa M."/>
            <person name="Oneyama C."/>
            <person name="Nada S."/>
            <person name="Okada M."/>
        </authorList>
    </citation>
    <scope>FUNCTION</scope>
    <scope>INTERACTION WITH ARHGEF5</scope>
    <scope>SUBCELLULAR LOCATION</scope>
</reference>
<reference key="24">
    <citation type="journal article" date="2012" name="Mol. Cell. Biol.">
        <title>Protein tyrosine phosphatase alpha phosphotyrosyl-789 binds BCAR3 to position Cas for activation at integrin-mediated focal adhesions.</title>
        <authorList>
            <person name="Sun G."/>
            <person name="Cheng S.Y."/>
            <person name="Chen M."/>
            <person name="Lim C.J."/>
            <person name="Pallen C.J."/>
        </authorList>
    </citation>
    <scope>IDENTIFICATION IN A COMPLEX WITH PTPRA; BCAR1 AND BCAR3</scope>
    <scope>SUBCELLULAR LOCATION</scope>
    <scope>PHOSPHORYLATION AT TYR-418 AND TYR-529</scope>
</reference>
<reference key="25">
    <citation type="journal article" date="2019" name="Science">
        <title>Nuclear hnRNPA2B1 initiates and amplifies the innate immune response to DNA viruses.</title>
        <authorList>
            <person name="Wang L."/>
            <person name="Wen M."/>
            <person name="Cao X."/>
        </authorList>
    </citation>
    <scope>INTERACTION WITH HNRNPA2B1</scope>
</reference>
<reference key="26">
    <citation type="journal article" date="1996" name="Biochim. Biophys. Acta">
        <title>Regulation, substrates and functions of src.</title>
        <authorList>
            <person name="Brown M.T."/>
            <person name="Cooper J.A."/>
        </authorList>
    </citation>
    <scope>REVIEW ON FUNCTION</scope>
</reference>
<reference key="27">
    <citation type="journal article" date="1997" name="Annu. Rev. Cell Dev. Biol.">
        <title>Cellular functions regulated by Src family kinases.</title>
        <authorList>
            <person name="Thomas S.M."/>
            <person name="Brugge J.S."/>
        </authorList>
    </citation>
    <scope>REVIEW ON FUNCTION</scope>
</reference>
<reference key="28">
    <citation type="journal article" date="2002" name="Cell. Mol. Life Sci.">
        <title>Novel regulation and function of Src tyrosine kinase.</title>
        <authorList>
            <person name="Ma Y.C."/>
            <person name="Huang X.Y."/>
        </authorList>
    </citation>
    <scope>REVIEW ON FUNCTION</scope>
</reference>
<reference key="29">
    <citation type="journal article" date="2015" name="Nature">
        <title>A gp130-Src-YAP module links inflammation to epithelial regeneration.</title>
        <authorList>
            <person name="Taniguchi K."/>
            <person name="Wu L.W."/>
            <person name="Grivennikov S.I."/>
            <person name="de Jong P.R."/>
            <person name="Lian I."/>
            <person name="Yu F.X."/>
            <person name="Wang K."/>
            <person name="Ho S.B."/>
            <person name="Boland B.S."/>
            <person name="Chang J.T."/>
            <person name="Sandborn W.J."/>
            <person name="Hardiman G."/>
            <person name="Raz E."/>
            <person name="Maehara Y."/>
            <person name="Yoshimura A."/>
            <person name="Zucman-Rossi J."/>
            <person name="Guan K.L."/>
            <person name="Karin M."/>
        </authorList>
    </citation>
    <scope>FUNCTION</scope>
    <scope>PHOSPHORYLATION AT TYR-418 AND TYR-529</scope>
</reference>
<reference key="30">
    <citation type="journal article" date="2017" name="Elife">
        <title>Ambra1 spatially regulates Src activity and Src/FAK-mediated cancer cell invasion via trafficking networks.</title>
        <authorList>
            <person name="Schoenherr C."/>
            <person name="Byron A."/>
            <person name="Sandilands E."/>
            <person name="Paliashvili K."/>
            <person name="Baillie G.S."/>
            <person name="Garcia-Munoz A."/>
            <person name="Valacca C."/>
            <person name="Cecconi F."/>
            <person name="Serrels B."/>
            <person name="Frame M.C."/>
        </authorList>
    </citation>
    <scope>INTERACTION WITH AMBRA1</scope>
</reference>
<sequence length="535" mass="59891">MGSNKSKPKDASQRRRSLEPSENVHGAGGAFPASQTPSKPASADGHRGPSAAFVPPAAEPKLFGGFNSSDTVTSPQRAGPLAGGVTTFVALYDYESRTETDLSFKKGERLQIVNNTEGDWWLAHSLSTGQTGYIPSNYVAPSDSIQAEEWYFGKITRRESERLLLNAENPRGTFLVRESETTKGAYCLSVSDFDNAKGLNVKHYKIRKLDSGGFYITSRTQFNSLQQLVAYYSKHADGLCHRLTTVCPTSKPQTQGLAKDAWEIPRESLRLEVKLGQGCFGEVWMGTWNGTTRVAIKTLKPGTMSPEAFLQEAQVMKKLRHEKLVQLYAVVSEEPIYIVTEYMNKGSLLDFLKGETGKYLRLPQLVDMSAQIASGMAYVERMNYVHRDLRAANILVGENLVCKVADFGLARLIEDNEYTARQGAKFPIKWTAPEAALYGRFTIKSDVWSFGILLTELTTKGRVPYPGMVNREVLDQVERGYRMPCPPECPESLHDLMCQCWRKEPEERPTFEYLQAFLEDYFTSTEPQYQPGENL</sequence>
<dbReference type="EC" id="2.7.10.2" evidence="27"/>
<dbReference type="EMBL" id="M17031">
    <property type="protein sequence ID" value="AAA40135.1"/>
    <property type="molecule type" value="mRNA"/>
</dbReference>
<dbReference type="EMBL" id="AY902331">
    <property type="protein sequence ID" value="AAX90616.1"/>
    <property type="molecule type" value="Genomic_DNA"/>
</dbReference>
<dbReference type="EMBL" id="AL672259">
    <property type="status" value="NOT_ANNOTATED_CDS"/>
    <property type="molecule type" value="Genomic_DNA"/>
</dbReference>
<dbReference type="EMBL" id="CH466551">
    <property type="protein sequence ID" value="EDL06234.1"/>
    <property type="molecule type" value="Genomic_DNA"/>
</dbReference>
<dbReference type="CCDS" id="CCDS16978.1">
    <molecule id="P05480-2"/>
</dbReference>
<dbReference type="CCDS" id="CCDS38305.1">
    <molecule id="P05480-1"/>
</dbReference>
<dbReference type="PIR" id="A43610">
    <property type="entry name" value="A43610"/>
</dbReference>
<dbReference type="RefSeq" id="NP_001020566.1">
    <molecule id="P05480-2"/>
    <property type="nucleotide sequence ID" value="NM_001025395.3"/>
</dbReference>
<dbReference type="RefSeq" id="NP_001399611.1">
    <molecule id="P05480-1"/>
    <property type="nucleotide sequence ID" value="NM_001412682.1"/>
</dbReference>
<dbReference type="RefSeq" id="NP_001399612.1">
    <molecule id="P05480-1"/>
    <property type="nucleotide sequence ID" value="NM_001412683.1"/>
</dbReference>
<dbReference type="RefSeq" id="NP_001399613.1">
    <molecule id="P05480-1"/>
    <property type="nucleotide sequence ID" value="NM_001412684.1"/>
</dbReference>
<dbReference type="RefSeq" id="NP_001399614.1">
    <molecule id="P05480-1"/>
    <property type="nucleotide sequence ID" value="NM_001412685.1"/>
</dbReference>
<dbReference type="RefSeq" id="NP_001399615.1">
    <molecule id="P05480-1"/>
    <property type="nucleotide sequence ID" value="NM_001412686.1"/>
</dbReference>
<dbReference type="RefSeq" id="NP_001399616.1">
    <molecule id="P05480-2"/>
    <property type="nucleotide sequence ID" value="NM_001412687.1"/>
</dbReference>
<dbReference type="RefSeq" id="NP_001399617.1">
    <molecule id="P05480-2"/>
    <property type="nucleotide sequence ID" value="NM_001412688.1"/>
</dbReference>
<dbReference type="RefSeq" id="NP_001399618.1">
    <molecule id="P05480-2"/>
    <property type="nucleotide sequence ID" value="NM_001412689.1"/>
</dbReference>
<dbReference type="RefSeq" id="NP_001399619.1">
    <molecule id="P05480-2"/>
    <property type="nucleotide sequence ID" value="NM_001412690.1"/>
</dbReference>
<dbReference type="RefSeq" id="NP_001399620.1">
    <molecule id="P05480-2"/>
    <property type="nucleotide sequence ID" value="NM_001412691.1"/>
</dbReference>
<dbReference type="RefSeq" id="NP_001399622.1">
    <molecule id="P05480-1"/>
    <property type="nucleotide sequence ID" value="NM_001412693.1"/>
</dbReference>
<dbReference type="RefSeq" id="NP_001407929.1">
    <molecule id="P05480-2"/>
    <property type="nucleotide sequence ID" value="NM_001421000.1"/>
</dbReference>
<dbReference type="RefSeq" id="NP_033297.2">
    <molecule id="P05480-1"/>
    <property type="nucleotide sequence ID" value="NM_009271.4"/>
</dbReference>
<dbReference type="RefSeq" id="XP_036015976.1">
    <molecule id="P05480-2"/>
    <property type="nucleotide sequence ID" value="XM_036160083.1"/>
</dbReference>
<dbReference type="RefSeq" id="XP_036015977.1">
    <molecule id="P05480-2"/>
    <property type="nucleotide sequence ID" value="XM_036160084.1"/>
</dbReference>
<dbReference type="RefSeq" id="XP_036015978.1">
    <molecule id="P05480-2"/>
    <property type="nucleotide sequence ID" value="XM_036160085.1"/>
</dbReference>
<dbReference type="PDB" id="6F3F">
    <property type="method" value="X-ray"/>
    <property type="resolution" value="2.42 A"/>
    <property type="chains" value="A=85-535"/>
</dbReference>
<dbReference type="PDB" id="8XN8">
    <property type="method" value="X-ray"/>
    <property type="resolution" value="1.95 A"/>
    <property type="chains" value="A=85-535"/>
</dbReference>
<dbReference type="PDBsum" id="6F3F"/>
<dbReference type="PDBsum" id="8XN8"/>
<dbReference type="BMRB" id="P05480"/>
<dbReference type="SMR" id="P05480"/>
<dbReference type="BioGRID" id="203491">
    <property type="interactions" value="92"/>
</dbReference>
<dbReference type="CORUM" id="P05480"/>
<dbReference type="DIP" id="DIP-31071N"/>
<dbReference type="FunCoup" id="P05480">
    <property type="interactions" value="1612"/>
</dbReference>
<dbReference type="IntAct" id="P05480">
    <property type="interactions" value="41"/>
</dbReference>
<dbReference type="MINT" id="P05480"/>
<dbReference type="STRING" id="10090.ENSMUSP00000090237"/>
<dbReference type="BindingDB" id="P05480"/>
<dbReference type="ChEMBL" id="CHEMBL3074"/>
<dbReference type="GlyGen" id="P05480">
    <property type="glycosylation" value="3 sites, 1 N-linked glycan (1 site), 1 O-linked glycan (1 site)"/>
</dbReference>
<dbReference type="iPTMnet" id="P05480"/>
<dbReference type="PhosphoSitePlus" id="P05480"/>
<dbReference type="SwissPalm" id="P05480"/>
<dbReference type="jPOST" id="P05480"/>
<dbReference type="PaxDb" id="10090-ENSMUSP00000029175"/>
<dbReference type="PeptideAtlas" id="P05480"/>
<dbReference type="ProteomicsDB" id="263340">
    <molecule id="P05480-2"/>
</dbReference>
<dbReference type="ProteomicsDB" id="343377"/>
<dbReference type="Pumba" id="P05480"/>
<dbReference type="Antibodypedia" id="3409">
    <property type="antibodies" value="2019 antibodies from 46 providers"/>
</dbReference>
<dbReference type="DNASU" id="20779"/>
<dbReference type="Ensembl" id="ENSMUST00000029175.14">
    <molecule id="P05480-2"/>
    <property type="protein sequence ID" value="ENSMUSP00000029175.8"/>
    <property type="gene ID" value="ENSMUSG00000027646.16"/>
</dbReference>
<dbReference type="Ensembl" id="ENSMUST00000092576.11">
    <molecule id="P05480-1"/>
    <property type="protein sequence ID" value="ENSMUSP00000090237.5"/>
    <property type="gene ID" value="ENSMUSG00000027646.16"/>
</dbReference>
<dbReference type="Ensembl" id="ENSMUST00000109529.2">
    <molecule id="P05480-1"/>
    <property type="protein sequence ID" value="ENSMUSP00000105155.2"/>
    <property type="gene ID" value="ENSMUSG00000027646.16"/>
</dbReference>
<dbReference type="Ensembl" id="ENSMUST00000109531.8">
    <molecule id="P05480-2"/>
    <property type="protein sequence ID" value="ENSMUSP00000105157.2"/>
    <property type="gene ID" value="ENSMUSG00000027646.16"/>
</dbReference>
<dbReference type="Ensembl" id="ENSMUST00000109533.8">
    <molecule id="P05480-2"/>
    <property type="protein sequence ID" value="ENSMUSP00000105159.2"/>
    <property type="gene ID" value="ENSMUSG00000027646.16"/>
</dbReference>
<dbReference type="GeneID" id="20779"/>
<dbReference type="KEGG" id="mmu:20779"/>
<dbReference type="UCSC" id="uc008npa.1">
    <molecule id="P05480-2"/>
    <property type="organism name" value="mouse"/>
</dbReference>
<dbReference type="AGR" id="MGI:98397"/>
<dbReference type="CTD" id="6714"/>
<dbReference type="MGI" id="MGI:98397">
    <property type="gene designation" value="Src"/>
</dbReference>
<dbReference type="VEuPathDB" id="HostDB:ENSMUSG00000027646"/>
<dbReference type="eggNOG" id="KOG0197">
    <property type="taxonomic scope" value="Eukaryota"/>
</dbReference>
<dbReference type="GeneTree" id="ENSGT00940000158250"/>
<dbReference type="InParanoid" id="P05480"/>
<dbReference type="OMA" id="NYIAPVK"/>
<dbReference type="PhylomeDB" id="P05480"/>
<dbReference type="BRENDA" id="2.7.10.2">
    <property type="organism ID" value="3474"/>
</dbReference>
<dbReference type="Reactome" id="R-MMU-1227986">
    <property type="pathway name" value="Signaling by ERBB2"/>
</dbReference>
<dbReference type="Reactome" id="R-MMU-1251985">
    <property type="pathway name" value="Nuclear signaling by ERBB4"/>
</dbReference>
<dbReference type="Reactome" id="R-MMU-1253288">
    <property type="pathway name" value="Downregulation of ERBB4 signaling"/>
</dbReference>
<dbReference type="Reactome" id="R-MMU-1257604">
    <property type="pathway name" value="PIP3 activates AKT signaling"/>
</dbReference>
<dbReference type="Reactome" id="R-MMU-1295596">
    <property type="pathway name" value="Spry regulation of FGF signaling"/>
</dbReference>
<dbReference type="Reactome" id="R-MMU-1433557">
    <property type="pathway name" value="Signaling by SCF-KIT"/>
</dbReference>
<dbReference type="Reactome" id="R-MMU-1433559">
    <property type="pathway name" value="Regulation of KIT signaling"/>
</dbReference>
<dbReference type="Reactome" id="R-MMU-177929">
    <property type="pathway name" value="Signaling by EGFR"/>
</dbReference>
<dbReference type="Reactome" id="R-MMU-180292">
    <property type="pathway name" value="GAB1 signalosome"/>
</dbReference>
<dbReference type="Reactome" id="R-MMU-186763">
    <property type="pathway name" value="Downstream signal transduction"/>
</dbReference>
<dbReference type="Reactome" id="R-MMU-191650">
    <property type="pathway name" value="Regulation of gap junction activity"/>
</dbReference>
<dbReference type="Reactome" id="R-MMU-2029481">
    <property type="pathway name" value="FCGR activation"/>
</dbReference>
<dbReference type="Reactome" id="R-MMU-210990">
    <property type="pathway name" value="PECAM1 interactions"/>
</dbReference>
<dbReference type="Reactome" id="R-MMU-354192">
    <property type="pathway name" value="Integrin signaling"/>
</dbReference>
<dbReference type="Reactome" id="R-MMU-354194">
    <property type="pathway name" value="GRB2:SOS provides linkage to MAPK signaling for Integrins"/>
</dbReference>
<dbReference type="Reactome" id="R-MMU-372708">
    <property type="pathway name" value="p130Cas linkage to MAPK signaling for integrins"/>
</dbReference>
<dbReference type="Reactome" id="R-MMU-389356">
    <property type="pathway name" value="Co-stimulation by CD28"/>
</dbReference>
<dbReference type="Reactome" id="R-MMU-389513">
    <property type="pathway name" value="Co-inhibition by CTLA4"/>
</dbReference>
<dbReference type="Reactome" id="R-MMU-3928662">
    <property type="pathway name" value="EPHB-mediated forward signaling"/>
</dbReference>
<dbReference type="Reactome" id="R-MMU-3928663">
    <property type="pathway name" value="EPHA-mediated growth cone collapse"/>
</dbReference>
<dbReference type="Reactome" id="R-MMU-3928664">
    <property type="pathway name" value="Ephrin signaling"/>
</dbReference>
<dbReference type="Reactome" id="R-MMU-3928665">
    <property type="pathway name" value="EPH-ephrin mediated repulsion of cells"/>
</dbReference>
<dbReference type="Reactome" id="R-MMU-418592">
    <property type="pathway name" value="ADP signalling through P2Y purinoceptor 1"/>
</dbReference>
<dbReference type="Reactome" id="R-MMU-418594">
    <property type="pathway name" value="G alpha (i) signalling events"/>
</dbReference>
<dbReference type="Reactome" id="R-MMU-418885">
    <property type="pathway name" value="DCC mediated attractive signaling"/>
</dbReference>
<dbReference type="Reactome" id="R-MMU-430116">
    <property type="pathway name" value="GP1b-IX-V activation signalling"/>
</dbReference>
<dbReference type="Reactome" id="R-MMU-437239">
    <property type="pathway name" value="Recycling pathway of L1"/>
</dbReference>
<dbReference type="Reactome" id="R-MMU-4420097">
    <property type="pathway name" value="VEGFA-VEGFR2 Pathway"/>
</dbReference>
<dbReference type="Reactome" id="R-MMU-456926">
    <property type="pathway name" value="Thrombin signalling through proteinase activated receptors (PARs)"/>
</dbReference>
<dbReference type="Reactome" id="R-MMU-5218921">
    <property type="pathway name" value="VEGFR2 mediated cell proliferation"/>
</dbReference>
<dbReference type="Reactome" id="R-MMU-5607764">
    <property type="pathway name" value="CLEC7A (Dectin-1) signaling"/>
</dbReference>
<dbReference type="Reactome" id="R-MMU-5663220">
    <property type="pathway name" value="RHO GTPases Activate Formins"/>
</dbReference>
<dbReference type="Reactome" id="R-MMU-5673000">
    <property type="pathway name" value="RAF activation"/>
</dbReference>
<dbReference type="Reactome" id="R-MMU-5674135">
    <property type="pathway name" value="MAP2K and MAPK activation"/>
</dbReference>
<dbReference type="Reactome" id="R-MMU-6811558">
    <property type="pathway name" value="PI5P, PP2A and IER3 Regulate PI3K/AKT Signaling"/>
</dbReference>
<dbReference type="Reactome" id="R-MMU-69231">
    <property type="pathway name" value="Cyclin D associated events in G1"/>
</dbReference>
<dbReference type="Reactome" id="R-MMU-8853659">
    <property type="pathway name" value="RET signaling"/>
</dbReference>
<dbReference type="Reactome" id="R-MMU-8874081">
    <property type="pathway name" value="MET activates PTK2 signaling"/>
</dbReference>
<dbReference type="Reactome" id="R-MMU-8934903">
    <property type="pathway name" value="Receptor Mediated Mitophagy"/>
</dbReference>
<dbReference type="Reactome" id="R-MMU-8941858">
    <property type="pathway name" value="Regulation of RUNX3 expression and activity"/>
</dbReference>
<dbReference type="Reactome" id="R-MMU-9009391">
    <property type="pathway name" value="Extra-nuclear estrogen signaling"/>
</dbReference>
<dbReference type="Reactome" id="R-MMU-9603381">
    <property type="pathway name" value="Activated NTRK3 signals through PI3K"/>
</dbReference>
<dbReference type="BioGRID-ORCS" id="20779">
    <property type="hits" value="1 hit in 78 CRISPR screens"/>
</dbReference>
<dbReference type="CD-CODE" id="CE726F99">
    <property type="entry name" value="Postsynaptic density"/>
</dbReference>
<dbReference type="ChiTaRS" id="Src">
    <property type="organism name" value="mouse"/>
</dbReference>
<dbReference type="PRO" id="PR:P05480"/>
<dbReference type="Proteomes" id="UP000000589">
    <property type="component" value="Chromosome 2"/>
</dbReference>
<dbReference type="RNAct" id="P05480">
    <property type="molecule type" value="protein"/>
</dbReference>
<dbReference type="Bgee" id="ENSMUSG00000027646">
    <property type="expression patterns" value="Expressed in dentate gyrus of hippocampal formation granule cell and 212 other cell types or tissues"/>
</dbReference>
<dbReference type="ExpressionAtlas" id="P05480">
    <property type="expression patterns" value="baseline and differential"/>
</dbReference>
<dbReference type="GO" id="GO:0005884">
    <property type="term" value="C:actin filament"/>
    <property type="evidence" value="ECO:0000314"/>
    <property type="project" value="MGI"/>
</dbReference>
<dbReference type="GO" id="GO:0005901">
    <property type="term" value="C:caveola"/>
    <property type="evidence" value="ECO:0000314"/>
    <property type="project" value="BHF-UCL"/>
</dbReference>
<dbReference type="GO" id="GO:0030054">
    <property type="term" value="C:cell junction"/>
    <property type="evidence" value="ECO:0000250"/>
    <property type="project" value="UniProtKB"/>
</dbReference>
<dbReference type="GO" id="GO:0005911">
    <property type="term" value="C:cell-cell junction"/>
    <property type="evidence" value="ECO:0000250"/>
    <property type="project" value="UniProtKB"/>
</dbReference>
<dbReference type="GO" id="GO:0005737">
    <property type="term" value="C:cytoplasm"/>
    <property type="evidence" value="ECO:0000314"/>
    <property type="project" value="CAFA"/>
</dbReference>
<dbReference type="GO" id="GO:0005856">
    <property type="term" value="C:cytoskeleton"/>
    <property type="evidence" value="ECO:0000314"/>
    <property type="project" value="UniProtKB"/>
</dbReference>
<dbReference type="GO" id="GO:0005829">
    <property type="term" value="C:cytosol"/>
    <property type="evidence" value="ECO:0000304"/>
    <property type="project" value="Reactome"/>
</dbReference>
<dbReference type="GO" id="GO:0005925">
    <property type="term" value="C:focal adhesion"/>
    <property type="evidence" value="ECO:0000315"/>
    <property type="project" value="UniProtKB"/>
</dbReference>
<dbReference type="GO" id="GO:0005770">
    <property type="term" value="C:late endosome"/>
    <property type="evidence" value="ECO:0007669"/>
    <property type="project" value="Ensembl"/>
</dbReference>
<dbReference type="GO" id="GO:0005764">
    <property type="term" value="C:lysosome"/>
    <property type="evidence" value="ECO:0007669"/>
    <property type="project" value="Ensembl"/>
</dbReference>
<dbReference type="GO" id="GO:0016020">
    <property type="term" value="C:membrane"/>
    <property type="evidence" value="ECO:0000315"/>
    <property type="project" value="UniProtKB"/>
</dbReference>
<dbReference type="GO" id="GO:0005743">
    <property type="term" value="C:mitochondrial inner membrane"/>
    <property type="evidence" value="ECO:0000314"/>
    <property type="project" value="UniProtKB"/>
</dbReference>
<dbReference type="GO" id="GO:0005739">
    <property type="term" value="C:mitochondrion"/>
    <property type="evidence" value="ECO:0000314"/>
    <property type="project" value="UniProtKB"/>
</dbReference>
<dbReference type="GO" id="GO:0005654">
    <property type="term" value="C:nucleoplasm"/>
    <property type="evidence" value="ECO:0000304"/>
    <property type="project" value="Reactome"/>
</dbReference>
<dbReference type="GO" id="GO:0005634">
    <property type="term" value="C:nucleus"/>
    <property type="evidence" value="ECO:0000314"/>
    <property type="project" value="UniProtKB"/>
</dbReference>
<dbReference type="GO" id="GO:0048471">
    <property type="term" value="C:perinuclear region of cytoplasm"/>
    <property type="evidence" value="ECO:0000314"/>
    <property type="project" value="MGI"/>
</dbReference>
<dbReference type="GO" id="GO:0005886">
    <property type="term" value="C:plasma membrane"/>
    <property type="evidence" value="ECO:0000314"/>
    <property type="project" value="UniProtKB"/>
</dbReference>
<dbReference type="GO" id="GO:0002102">
    <property type="term" value="C:podosome"/>
    <property type="evidence" value="ECO:0000314"/>
    <property type="project" value="MGI"/>
</dbReference>
<dbReference type="GO" id="GO:0032587">
    <property type="term" value="C:ruffle membrane"/>
    <property type="evidence" value="ECO:0000314"/>
    <property type="project" value="MGI"/>
</dbReference>
<dbReference type="GO" id="GO:0005524">
    <property type="term" value="F:ATP binding"/>
    <property type="evidence" value="ECO:0007669"/>
    <property type="project" value="UniProtKB-KW"/>
</dbReference>
<dbReference type="GO" id="GO:0070700">
    <property type="term" value="F:BMP receptor binding"/>
    <property type="evidence" value="ECO:0007669"/>
    <property type="project" value="Ensembl"/>
</dbReference>
<dbReference type="GO" id="GO:0071253">
    <property type="term" value="F:connexin binding"/>
    <property type="evidence" value="ECO:0000353"/>
    <property type="project" value="CAFA"/>
</dbReference>
<dbReference type="GO" id="GO:0046875">
    <property type="term" value="F:ephrin receptor binding"/>
    <property type="evidence" value="ECO:0000353"/>
    <property type="project" value="UniProtKB"/>
</dbReference>
<dbReference type="GO" id="GO:0020037">
    <property type="term" value="F:heme binding"/>
    <property type="evidence" value="ECO:0000250"/>
    <property type="project" value="UniProtKB"/>
</dbReference>
<dbReference type="GO" id="GO:0005178">
    <property type="term" value="F:integrin binding"/>
    <property type="evidence" value="ECO:0007669"/>
    <property type="project" value="Ensembl"/>
</dbReference>
<dbReference type="GO" id="GO:0016301">
    <property type="term" value="F:kinase activity"/>
    <property type="evidence" value="ECO:0000315"/>
    <property type="project" value="MGI"/>
</dbReference>
<dbReference type="GO" id="GO:0004715">
    <property type="term" value="F:non-membrane spanning protein tyrosine kinase activity"/>
    <property type="evidence" value="ECO:0007669"/>
    <property type="project" value="UniProtKB-EC"/>
</dbReference>
<dbReference type="GO" id="GO:0016004">
    <property type="term" value="F:phospholipase activator activity"/>
    <property type="evidence" value="ECO:0007669"/>
    <property type="project" value="Ensembl"/>
</dbReference>
<dbReference type="GO" id="GO:0043274">
    <property type="term" value="F:phospholipase binding"/>
    <property type="evidence" value="ECO:0007669"/>
    <property type="project" value="Ensembl"/>
</dbReference>
<dbReference type="GO" id="GO:0051219">
    <property type="term" value="F:phosphoprotein binding"/>
    <property type="evidence" value="ECO:0007669"/>
    <property type="project" value="Ensembl"/>
</dbReference>
<dbReference type="GO" id="GO:0019904">
    <property type="term" value="F:protein domain specific binding"/>
    <property type="evidence" value="ECO:0000353"/>
    <property type="project" value="MGI"/>
</dbReference>
<dbReference type="GO" id="GO:0004672">
    <property type="term" value="F:protein kinase activity"/>
    <property type="evidence" value="ECO:0000314"/>
    <property type="project" value="MGI"/>
</dbReference>
<dbReference type="GO" id="GO:0004713">
    <property type="term" value="F:protein tyrosine kinase activity"/>
    <property type="evidence" value="ECO:0000314"/>
    <property type="project" value="UniProtKB"/>
</dbReference>
<dbReference type="GO" id="GO:0097110">
    <property type="term" value="F:scaffold protein binding"/>
    <property type="evidence" value="ECO:0000353"/>
    <property type="project" value="BHF-UCL"/>
</dbReference>
<dbReference type="GO" id="GO:0042169">
    <property type="term" value="F:SH2 domain binding"/>
    <property type="evidence" value="ECO:0007669"/>
    <property type="project" value="Ensembl"/>
</dbReference>
<dbReference type="GO" id="GO:0044325">
    <property type="term" value="F:transmembrane transporter binding"/>
    <property type="evidence" value="ECO:0007669"/>
    <property type="project" value="Ensembl"/>
</dbReference>
<dbReference type="GO" id="GO:0038166">
    <property type="term" value="P:angiotensin-activated signaling pathway"/>
    <property type="evidence" value="ECO:0000316"/>
    <property type="project" value="BHF-UCL"/>
</dbReference>
<dbReference type="GO" id="GO:0045453">
    <property type="term" value="P:bone resorption"/>
    <property type="evidence" value="ECO:0000315"/>
    <property type="project" value="UniProtKB"/>
</dbReference>
<dbReference type="GO" id="GO:0060444">
    <property type="term" value="P:branching involved in mammary gland duct morphogenesis"/>
    <property type="evidence" value="ECO:0000315"/>
    <property type="project" value="MGI"/>
</dbReference>
<dbReference type="GO" id="GO:0016477">
    <property type="term" value="P:cell migration"/>
    <property type="evidence" value="ECO:0000315"/>
    <property type="project" value="MGI"/>
</dbReference>
<dbReference type="GO" id="GO:0071498">
    <property type="term" value="P:cellular response to fluid shear stress"/>
    <property type="evidence" value="ECO:0000315"/>
    <property type="project" value="MGI"/>
</dbReference>
<dbReference type="GO" id="GO:0070301">
    <property type="term" value="P:cellular response to hydrogen peroxide"/>
    <property type="evidence" value="ECO:0000315"/>
    <property type="project" value="MGI"/>
</dbReference>
<dbReference type="GO" id="GO:0071375">
    <property type="term" value="P:cellular response to peptide hormone stimulus"/>
    <property type="evidence" value="ECO:0000316"/>
    <property type="project" value="BHF-UCL"/>
</dbReference>
<dbReference type="GO" id="GO:0036120">
    <property type="term" value="P:cellular response to platelet-derived growth factor stimulus"/>
    <property type="evidence" value="ECO:0000314"/>
    <property type="project" value="MGI"/>
</dbReference>
<dbReference type="GO" id="GO:0034614">
    <property type="term" value="P:cellular response to reactive oxygen species"/>
    <property type="evidence" value="ECO:0000314"/>
    <property type="project" value="MGI"/>
</dbReference>
<dbReference type="GO" id="GO:0071560">
    <property type="term" value="P:cellular response to transforming growth factor beta stimulus"/>
    <property type="evidence" value="ECO:0000316"/>
    <property type="project" value="MGI"/>
</dbReference>
<dbReference type="GO" id="GO:0048041">
    <property type="term" value="P:focal adhesion assembly"/>
    <property type="evidence" value="ECO:0007669"/>
    <property type="project" value="Ensembl"/>
</dbReference>
<dbReference type="GO" id="GO:0030900">
    <property type="term" value="P:forebrain development"/>
    <property type="evidence" value="ECO:0000316"/>
    <property type="project" value="MGI"/>
</dbReference>
<dbReference type="GO" id="GO:0002376">
    <property type="term" value="P:immune system process"/>
    <property type="evidence" value="ECO:0007669"/>
    <property type="project" value="UniProtKB-KW"/>
</dbReference>
<dbReference type="GO" id="GO:0007229">
    <property type="term" value="P:integrin-mediated signaling pathway"/>
    <property type="evidence" value="ECO:0007669"/>
    <property type="project" value="Ensembl"/>
</dbReference>
<dbReference type="GO" id="GO:0070102">
    <property type="term" value="P:interleukin-6-mediated signaling pathway"/>
    <property type="evidence" value="ECO:0000314"/>
    <property type="project" value="UniProtKB"/>
</dbReference>
<dbReference type="GO" id="GO:0060576">
    <property type="term" value="P:intestinal epithelial cell development"/>
    <property type="evidence" value="ECO:0000314"/>
    <property type="project" value="UniProtKB"/>
</dbReference>
<dbReference type="GO" id="GO:0035556">
    <property type="term" value="P:intracellular signal transduction"/>
    <property type="evidence" value="ECO:0000315"/>
    <property type="project" value="BHF-UCL"/>
</dbReference>
<dbReference type="GO" id="GO:2000811">
    <property type="term" value="P:negative regulation of anoikis"/>
    <property type="evidence" value="ECO:0007669"/>
    <property type="project" value="Ensembl"/>
</dbReference>
<dbReference type="GO" id="GO:2001237">
    <property type="term" value="P:negative regulation of extrinsic apoptotic signaling pathway"/>
    <property type="evidence" value="ECO:0007669"/>
    <property type="project" value="Ensembl"/>
</dbReference>
<dbReference type="GO" id="GO:0035331">
    <property type="term" value="P:negative regulation of hippo signaling"/>
    <property type="evidence" value="ECO:0007669"/>
    <property type="project" value="Ensembl"/>
</dbReference>
<dbReference type="GO" id="GO:2001243">
    <property type="term" value="P:negative regulation of intrinsic apoptotic signaling pathway"/>
    <property type="evidence" value="ECO:0007669"/>
    <property type="project" value="Ensembl"/>
</dbReference>
<dbReference type="GO" id="GO:0051902">
    <property type="term" value="P:negative regulation of mitochondrial depolarization"/>
    <property type="evidence" value="ECO:0007669"/>
    <property type="project" value="Ensembl"/>
</dbReference>
<dbReference type="GO" id="GO:1902564">
    <property type="term" value="P:negative regulation of neutrophil activation"/>
    <property type="evidence" value="ECO:0007669"/>
    <property type="project" value="Ensembl"/>
</dbReference>
<dbReference type="GO" id="GO:0031333">
    <property type="term" value="P:negative regulation of protein-containing complex assembly"/>
    <property type="evidence" value="ECO:0007669"/>
    <property type="project" value="Ensembl"/>
</dbReference>
<dbReference type="GO" id="GO:0032205">
    <property type="term" value="P:negative regulation of telomere maintenance"/>
    <property type="evidence" value="ECO:0007669"/>
    <property type="project" value="Ensembl"/>
</dbReference>
<dbReference type="GO" id="GO:0000122">
    <property type="term" value="P:negative regulation of transcription by RNA polymerase II"/>
    <property type="evidence" value="ECO:0007669"/>
    <property type="project" value="Ensembl"/>
</dbReference>
<dbReference type="GO" id="GO:0042476">
    <property type="term" value="P:odontogenesis"/>
    <property type="evidence" value="ECO:0000315"/>
    <property type="project" value="MGI"/>
</dbReference>
<dbReference type="GO" id="GO:0048477">
    <property type="term" value="P:oogenesis"/>
    <property type="evidence" value="ECO:0000315"/>
    <property type="project" value="MGI"/>
</dbReference>
<dbReference type="GO" id="GO:0036035">
    <property type="term" value="P:osteoclast development"/>
    <property type="evidence" value="ECO:0000316"/>
    <property type="project" value="MGI"/>
</dbReference>
<dbReference type="GO" id="GO:0090263">
    <property type="term" value="P:positive regulation of canonical Wnt signaling pathway"/>
    <property type="evidence" value="ECO:0000316"/>
    <property type="project" value="MGI"/>
</dbReference>
<dbReference type="GO" id="GO:0035306">
    <property type="term" value="P:positive regulation of dephosphorylation"/>
    <property type="evidence" value="ECO:0007669"/>
    <property type="project" value="Ensembl"/>
</dbReference>
<dbReference type="GO" id="GO:0010634">
    <property type="term" value="P:positive regulation of epithelial cell migration"/>
    <property type="evidence" value="ECO:0007669"/>
    <property type="project" value="Ensembl"/>
</dbReference>
<dbReference type="GO" id="GO:0070374">
    <property type="term" value="P:positive regulation of ERK1 and ERK2 cascade"/>
    <property type="evidence" value="ECO:0000315"/>
    <property type="project" value="BHF-UCL"/>
</dbReference>
<dbReference type="GO" id="GO:0045821">
    <property type="term" value="P:positive regulation of glycolytic process"/>
    <property type="evidence" value="ECO:0000314"/>
    <property type="project" value="UniProt"/>
</dbReference>
<dbReference type="GO" id="GO:2000394">
    <property type="term" value="P:positive regulation of lamellipodium morphogenesis"/>
    <property type="evidence" value="ECO:0007669"/>
    <property type="project" value="Ensembl"/>
</dbReference>
<dbReference type="GO" id="GO:0045747">
    <property type="term" value="P:positive regulation of Notch signaling pathway"/>
    <property type="evidence" value="ECO:0000314"/>
    <property type="project" value="UniProtKB"/>
</dbReference>
<dbReference type="GO" id="GO:0051897">
    <property type="term" value="P:positive regulation of phosphatidylinositol 3-kinase/protein kinase B signal transduction"/>
    <property type="evidence" value="ECO:0007669"/>
    <property type="project" value="Ensembl"/>
</dbReference>
<dbReference type="GO" id="GO:2000588">
    <property type="term" value="P:positive regulation of platelet-derived growth factor receptor-beta signaling pathway"/>
    <property type="evidence" value="ECO:0000315"/>
    <property type="project" value="MGI"/>
</dbReference>
<dbReference type="GO" id="GO:0071803">
    <property type="term" value="P:positive regulation of podosome assembly"/>
    <property type="evidence" value="ECO:0000314"/>
    <property type="project" value="MGI"/>
</dbReference>
<dbReference type="GO" id="GO:1900182">
    <property type="term" value="P:positive regulation of protein localization to nucleus"/>
    <property type="evidence" value="ECO:0000316"/>
    <property type="project" value="MGI"/>
</dbReference>
<dbReference type="GO" id="GO:0010954">
    <property type="term" value="P:positive regulation of protein processing"/>
    <property type="evidence" value="ECO:0000316"/>
    <property type="project" value="MGI"/>
</dbReference>
<dbReference type="GO" id="GO:0051057">
    <property type="term" value="P:positive regulation of small GTPase mediated signal transduction"/>
    <property type="evidence" value="ECO:0007669"/>
    <property type="project" value="Ensembl"/>
</dbReference>
<dbReference type="GO" id="GO:1904263">
    <property type="term" value="P:positive regulation of TORC1 signaling"/>
    <property type="evidence" value="ECO:0007669"/>
    <property type="project" value="Ensembl"/>
</dbReference>
<dbReference type="GO" id="GO:0031648">
    <property type="term" value="P:protein destabilization"/>
    <property type="evidence" value="ECO:0000315"/>
    <property type="project" value="CACAO"/>
</dbReference>
<dbReference type="GO" id="GO:2001286">
    <property type="term" value="P:regulation of caveolin-mediated endocytosis"/>
    <property type="evidence" value="ECO:0007669"/>
    <property type="project" value="Ensembl"/>
</dbReference>
<dbReference type="GO" id="GO:0060491">
    <property type="term" value="P:regulation of cell projection assembly"/>
    <property type="evidence" value="ECO:0000316"/>
    <property type="project" value="MGI"/>
</dbReference>
<dbReference type="GO" id="GO:0022407">
    <property type="term" value="P:regulation of cell-cell adhesion"/>
    <property type="evidence" value="ECO:0007669"/>
    <property type="project" value="Ensembl"/>
</dbReference>
<dbReference type="GO" id="GO:2000641">
    <property type="term" value="P:regulation of early endosome to late endosome transport"/>
    <property type="evidence" value="ECO:0007669"/>
    <property type="project" value="Ensembl"/>
</dbReference>
<dbReference type="GO" id="GO:0086091">
    <property type="term" value="P:regulation of heart rate by cardiac conduction"/>
    <property type="evidence" value="ECO:0000316"/>
    <property type="project" value="BHF-UCL"/>
</dbReference>
<dbReference type="GO" id="GO:0033146">
    <property type="term" value="P:regulation of intracellular estrogen receptor signaling pathway"/>
    <property type="evidence" value="ECO:0000315"/>
    <property type="project" value="MGI"/>
</dbReference>
<dbReference type="GO" id="GO:0034139">
    <property type="term" value="P:regulation of toll-like receptor 3 signaling pathway"/>
    <property type="evidence" value="ECO:0007669"/>
    <property type="project" value="Ensembl"/>
</dbReference>
<dbReference type="GO" id="GO:0070555">
    <property type="term" value="P:response to interleukin-1"/>
    <property type="evidence" value="ECO:0007669"/>
    <property type="project" value="Ensembl"/>
</dbReference>
<dbReference type="GO" id="GO:0043149">
    <property type="term" value="P:stress fiber assembly"/>
    <property type="evidence" value="ECO:0007669"/>
    <property type="project" value="Ensembl"/>
</dbReference>
<dbReference type="GO" id="GO:0034446">
    <property type="term" value="P:substrate adhesion-dependent cell spreading"/>
    <property type="evidence" value="ECO:0000314"/>
    <property type="project" value="MGI"/>
</dbReference>
<dbReference type="GO" id="GO:0007179">
    <property type="term" value="P:transforming growth factor beta receptor signaling pathway"/>
    <property type="evidence" value="ECO:0007669"/>
    <property type="project" value="Ensembl"/>
</dbReference>
<dbReference type="GO" id="GO:0060065">
    <property type="term" value="P:uterus development"/>
    <property type="evidence" value="ECO:0000315"/>
    <property type="project" value="MGI"/>
</dbReference>
<dbReference type="GO" id="GO:0042311">
    <property type="term" value="P:vasodilation"/>
    <property type="evidence" value="ECO:0007669"/>
    <property type="project" value="Ensembl"/>
</dbReference>
<dbReference type="CDD" id="cd05071">
    <property type="entry name" value="PTKc_Src"/>
    <property type="match status" value="1"/>
</dbReference>
<dbReference type="CDD" id="cd10365">
    <property type="entry name" value="SH2_Src_Src"/>
    <property type="match status" value="1"/>
</dbReference>
<dbReference type="CDD" id="cd12008">
    <property type="entry name" value="SH3_Src"/>
    <property type="match status" value="1"/>
</dbReference>
<dbReference type="FunFam" id="1.10.510.10:FF:000553">
    <property type="entry name" value="Tyrosine-protein kinase"/>
    <property type="match status" value="1"/>
</dbReference>
<dbReference type="FunFam" id="2.30.30.40:FF:000083">
    <property type="entry name" value="Tyrosine-protein kinase"/>
    <property type="match status" value="1"/>
</dbReference>
<dbReference type="FunFam" id="3.30.200.20:FF:000016">
    <property type="entry name" value="Tyrosine-protein kinase"/>
    <property type="match status" value="1"/>
</dbReference>
<dbReference type="FunFam" id="3.30.505.10:FF:000001">
    <property type="entry name" value="Tyrosine-protein kinase"/>
    <property type="match status" value="1"/>
</dbReference>
<dbReference type="Gene3D" id="3.30.200.20">
    <property type="entry name" value="Phosphorylase Kinase, domain 1"/>
    <property type="match status" value="1"/>
</dbReference>
<dbReference type="Gene3D" id="3.30.505.10">
    <property type="entry name" value="SH2 domain"/>
    <property type="match status" value="1"/>
</dbReference>
<dbReference type="Gene3D" id="2.30.30.40">
    <property type="entry name" value="SH3 Domains"/>
    <property type="match status" value="1"/>
</dbReference>
<dbReference type="Gene3D" id="1.10.510.10">
    <property type="entry name" value="Transferase(Phosphotransferase) domain 1"/>
    <property type="match status" value="1"/>
</dbReference>
<dbReference type="InterPro" id="IPR011009">
    <property type="entry name" value="Kinase-like_dom_sf"/>
</dbReference>
<dbReference type="InterPro" id="IPR050198">
    <property type="entry name" value="Non-receptor_tyrosine_kinases"/>
</dbReference>
<dbReference type="InterPro" id="IPR000719">
    <property type="entry name" value="Prot_kinase_dom"/>
</dbReference>
<dbReference type="InterPro" id="IPR017441">
    <property type="entry name" value="Protein_kinase_ATP_BS"/>
</dbReference>
<dbReference type="InterPro" id="IPR001245">
    <property type="entry name" value="Ser-Thr/Tyr_kinase_cat_dom"/>
</dbReference>
<dbReference type="InterPro" id="IPR000980">
    <property type="entry name" value="SH2"/>
</dbReference>
<dbReference type="InterPro" id="IPR036860">
    <property type="entry name" value="SH2_dom_sf"/>
</dbReference>
<dbReference type="InterPro" id="IPR036028">
    <property type="entry name" value="SH3-like_dom_sf"/>
</dbReference>
<dbReference type="InterPro" id="IPR001452">
    <property type="entry name" value="SH3_domain"/>
</dbReference>
<dbReference type="InterPro" id="IPR008266">
    <property type="entry name" value="Tyr_kinase_AS"/>
</dbReference>
<dbReference type="InterPro" id="IPR020635">
    <property type="entry name" value="Tyr_kinase_cat_dom"/>
</dbReference>
<dbReference type="PANTHER" id="PTHR24418">
    <property type="entry name" value="TYROSINE-PROTEIN KINASE"/>
    <property type="match status" value="1"/>
</dbReference>
<dbReference type="Pfam" id="PF07714">
    <property type="entry name" value="PK_Tyr_Ser-Thr"/>
    <property type="match status" value="1"/>
</dbReference>
<dbReference type="Pfam" id="PF00017">
    <property type="entry name" value="SH2"/>
    <property type="match status" value="1"/>
</dbReference>
<dbReference type="Pfam" id="PF00018">
    <property type="entry name" value="SH3_1"/>
    <property type="match status" value="1"/>
</dbReference>
<dbReference type="PRINTS" id="PR00401">
    <property type="entry name" value="SH2DOMAIN"/>
</dbReference>
<dbReference type="PRINTS" id="PR00452">
    <property type="entry name" value="SH3DOMAIN"/>
</dbReference>
<dbReference type="PRINTS" id="PR00109">
    <property type="entry name" value="TYRKINASE"/>
</dbReference>
<dbReference type="SMART" id="SM00252">
    <property type="entry name" value="SH2"/>
    <property type="match status" value="1"/>
</dbReference>
<dbReference type="SMART" id="SM00326">
    <property type="entry name" value="SH3"/>
    <property type="match status" value="1"/>
</dbReference>
<dbReference type="SMART" id="SM00219">
    <property type="entry name" value="TyrKc"/>
    <property type="match status" value="1"/>
</dbReference>
<dbReference type="SUPFAM" id="SSF56112">
    <property type="entry name" value="Protein kinase-like (PK-like)"/>
    <property type="match status" value="1"/>
</dbReference>
<dbReference type="SUPFAM" id="SSF55550">
    <property type="entry name" value="SH2 domain"/>
    <property type="match status" value="1"/>
</dbReference>
<dbReference type="SUPFAM" id="SSF50044">
    <property type="entry name" value="SH3-domain"/>
    <property type="match status" value="1"/>
</dbReference>
<dbReference type="PROSITE" id="PS00107">
    <property type="entry name" value="PROTEIN_KINASE_ATP"/>
    <property type="match status" value="1"/>
</dbReference>
<dbReference type="PROSITE" id="PS50011">
    <property type="entry name" value="PROTEIN_KINASE_DOM"/>
    <property type="match status" value="1"/>
</dbReference>
<dbReference type="PROSITE" id="PS00109">
    <property type="entry name" value="PROTEIN_KINASE_TYR"/>
    <property type="match status" value="1"/>
</dbReference>
<dbReference type="PROSITE" id="PS50001">
    <property type="entry name" value="SH2"/>
    <property type="match status" value="1"/>
</dbReference>
<dbReference type="PROSITE" id="PS50002">
    <property type="entry name" value="SH3"/>
    <property type="match status" value="1"/>
</dbReference>
<comment type="function">
    <text evidence="3 4 11 14 19 21 26 28 31 32 33">Non-receptor protein tyrosine kinase which is activated following engagement of many different classes of cellular receptors including immune response receptors, integrins and other adhesion receptors, receptor protein tyrosine kinases, G protein-coupled receptors as well as cytokine receptors. Participates in signaling pathways that control a diverse spectrum of biological activities including gene transcription, immune response, cell adhesion, cell cycle progression, apoptosis, migration, and transformation. Due to functional redundancy between members of the SRC kinase family, identification of the specific role of each SRC kinase is very difficult. SRC appears to be one of the primary kinases activated following engagement of receptors and plays a role in the activation of other protein tyrosine kinase (PTK) families. Receptor clustering or dimerization leads to recruitment of SRC to the receptor complexes where it phosphorylates the tyrosine residues within the receptor cytoplasmic domains. Plays an important role in the regulation of cytoskeletal organization through phosphorylation of specific substrates such as AFAP1. Phosphorylation of AFAP1 allows the SRC SH2 domain to bind AFAP1 and to localize to actin filaments. Cytoskeletal reorganization is also controlled through the phosphorylation of cortactin (CTTN) (Probable). When cells adhere via focal adhesions to the extracellular matrix, signals are transmitted by integrins into the cell resulting in tyrosine phosphorylation of a number of focal adhesion proteins, including PTK2/FAK1 and paxillin (PXN) (By similarity). In addition to phosphorylating focal adhesion proteins, SRC is also active at the sites of cell-cell contact adherens junctions and phosphorylates substrates such as beta-catenin (CTNNB1), delta-catenin (CTNND1), and plakoglobin (JUP). Another type of cell-cell junction, the gap junction, is also a target for SRC, which phosphorylates connexin-43 (GJA1). SRC is implicated in regulation of pre-mRNA-processing and phosphorylates RNA-binding proteins such as KHDRBS1 (Probable). Phosphorylates PKP3 at 'Tyr-195' in response to reactive oxygen species, which may cause the release of PKP3 from desmosome cell junctions into the cytoplasm (By similarity). Also plays a role in PDGF-mediated tyrosine phosphorylation of both STAT1 and STAT3, leading to increased DNA binding activity of these transcription factors (PubMed:9344858). Involved in the RAS pathway through phosphorylation of RASA1 and RASGRF1. Plays a role in EGF-mediated calcium-activated chloride channel activation (By similarity). Required for epidermal growth factor receptor (EGFR) internalization through phosphorylation of clathrin heavy chain (CLTC and CLTCL1) at 'Tyr-1477'. Involved in beta-arrestin (ARRB1 and ARRB2) desensitization through phosphorylation and activation of GRK2, leading to beta-arrestin phosphorylation and internalization. Has a critical role in the stimulation of the CDK20/MAPK3 mitogen-activated protein kinase cascade by epidermal growth factor (Probable). Might be involved not only in mediating the transduction of mitogenic signals at the level of the plasma membrane but also in controlling progression through the cell cycle via interaction with regulatory proteins in the nucleus (By similarity). Plays an important role in osteoclastic bone resorption in conjunction with PTK2B/PYK2. Both the formation of a SRC-PTK2B/PYK2 complex and SRC kinase activity are necessary for this function. Recruited to activated integrins by PTK2B/PYK2, thereby phosphorylating CBL, which in turn induces the activation and recruitment of phosphatidylinositol 3-kinase to the cell membrane in a signaling pathway that is critical for osteoclast function (PubMed:14739300). Promotes energy production in osteoclasts by activating mitochondrial cytochrome C oxidase (PubMed:12615910). Phosphorylates DDR2 on tyrosine residues, thereby promoting its subsequent autophosphorylation. Phosphorylates RUNX3 and COX2 on tyrosine residues, TNK2 on 'Tyr-284' and CBL on 'Tyr-738'. Enhances RIGI-elicited antiviral signaling. Phosphorylates PDPK1 at 'Tyr-9', 'Tyr-373' and 'Tyr-376'. Phosphorylates BCAR1 at 'Tyr-226'. Phosphorylates CBLC at multiple tyrosine residues, phosphorylation at 'Tyr-341' activates CBLC E3 activity. Phosphorylates synaptic vesicle protein synaptophysin (SYP) (By similarity). Involved in anchorage-independent cell growth (By similarity). Required for podosome formation (PubMed:21525037). Mediates IL6 signaling by activating YAP1-NOTCH pathway to induce inflammation-induced epithelial regeneration (PubMed:25731159). Phosphorylates OTUB1, promoting deubiquitination of RPTOR (By similarity).</text>
</comment>
<comment type="function">
    <molecule>Isoform 1</molecule>
    <text evidence="4">Non-receptor protein tyrosine kinase which phosphorylates synaptophysin with high affinity.</text>
</comment>
<comment type="function">
    <molecule>Isoform 2</molecule>
    <text evidence="4">Non-receptor protein tyrosine kinase which shows higher basal kinase activity than isoform 1, possibly due to weakened intramolecular interactions which enhance autophosphorylation of Tyr-418 and subsequent activation (By similarity). The SH3 domain shows reduced affinity with the linker sequence between the SH2 and kinase domains which may account for the increased basal activity (By similarity). Displays altered substrate specificity compared to isoform 1, showing weak affinity for synaptophysin and for peptide substrates containing class I or class II SH3 domain-binding motifs (By similarity). Plays a role in L1CAM-mediated neurite elongation, possibly by acting downstream of L1CAM to drive cytoskeletal rearrangements involved in neurite outgrowth (By similarity).</text>
</comment>
<comment type="catalytic activity">
    <reaction evidence="8 27">
        <text>L-tyrosyl-[protein] + ATP = O-phospho-L-tyrosyl-[protein] + ADP + H(+)</text>
        <dbReference type="Rhea" id="RHEA:10596"/>
        <dbReference type="Rhea" id="RHEA-COMP:10136"/>
        <dbReference type="Rhea" id="RHEA-COMP:20101"/>
        <dbReference type="ChEBI" id="CHEBI:15378"/>
        <dbReference type="ChEBI" id="CHEBI:30616"/>
        <dbReference type="ChEBI" id="CHEBI:46858"/>
        <dbReference type="ChEBI" id="CHEBI:61978"/>
        <dbReference type="ChEBI" id="CHEBI:456216"/>
        <dbReference type="EC" id="2.7.10.2"/>
    </reaction>
</comment>
<comment type="catalytic activity">
    <molecule>Isoform 1</molecule>
    <reaction evidence="4">
        <text>L-tyrosyl-[protein] + ATP = O-phospho-L-tyrosyl-[protein] + ADP + H(+)</text>
        <dbReference type="Rhea" id="RHEA:10596"/>
        <dbReference type="Rhea" id="RHEA-COMP:10136"/>
        <dbReference type="Rhea" id="RHEA-COMP:20101"/>
        <dbReference type="ChEBI" id="CHEBI:15378"/>
        <dbReference type="ChEBI" id="CHEBI:30616"/>
        <dbReference type="ChEBI" id="CHEBI:46858"/>
        <dbReference type="ChEBI" id="CHEBI:61978"/>
        <dbReference type="ChEBI" id="CHEBI:456216"/>
        <dbReference type="EC" id="2.7.10.2"/>
    </reaction>
</comment>
<comment type="catalytic activity">
    <molecule>Isoform 2</molecule>
    <reaction evidence="4">
        <text>L-tyrosyl-[protein] + ATP = O-phospho-L-tyrosyl-[protein] + ADP + H(+)</text>
        <dbReference type="Rhea" id="RHEA:10596"/>
        <dbReference type="Rhea" id="RHEA-COMP:10136"/>
        <dbReference type="Rhea" id="RHEA-COMP:20101"/>
        <dbReference type="ChEBI" id="CHEBI:15378"/>
        <dbReference type="ChEBI" id="CHEBI:30616"/>
        <dbReference type="ChEBI" id="CHEBI:46858"/>
        <dbReference type="ChEBI" id="CHEBI:61978"/>
        <dbReference type="ChEBI" id="CHEBI:456216"/>
        <dbReference type="EC" id="2.7.10.2"/>
    </reaction>
</comment>
<comment type="activity regulation">
    <text evidence="27">Phosphorylation by CSK at Tyr-529 inhibits kinase activity. Inhibitory phosphorylation at Tyr-529 is enhanced by heme. Further phosphorylation by CDK1 partially reactivates CSK-inactivated SRC and facilitates complete reactivation by protein tyrosine phosphatase PTPRC. Integrin engagement stimulates kinase activity. Phosphorylation by PTK2/FAK1 enhances kinase activity. Butein and pseudosubstrate-based peptide inhibitors like CIYKYYF act as inhibitors. Phosphorylation at Tyr-418 increases kinase activity.</text>
</comment>
<comment type="subunit">
    <text evidence="2 3 4 10 12 13 14 15 16 17 18 19 20 22 23 24 25 28 29">Part of a complex comprised of PTPRA, BCAR1, BCAR3 (via SH2 domain) and SRC; the formation of the complex is dependent on integrin mediated-tyrosine phosphorylation of PTPRA (PubMed:22801373). Interacts with CDCP1, TGFB1I1 and TOM1L2 (By similarity). Interacts with DDEF1/ASAP1 via its SH3 domain (PubMed:9819391). Interacts with CCPG1 (PubMed:17000758). Interacts with the cytoplasmic domain of MUC1, phosphorylates it and increases binding of MUC1 with beta-catenin (By similarity). Interacts with RALGPS1 via its SH3 domain (By similarity). Interacts with CAV2 (tyrosine phosphorylated form) (By similarity). Interacts (via the SH3 domain and the protein kinase domain) with ARRB1; the interaction is independent of the phosphorylation state of SRC C-terminus (By similarity). Interacts with FCAMR and PXN (By similarity). Interacts with ARRB2 (PubMed:19122674). Interacts with ARRB1 (By similarity). Interacts with SRCIN1 (By similarity). Interacts with NDFIP2 and more weakly with NDFIP1 (By similarity). Interacts with PIK3CA and/or PIK3C2B, PTK2/FAK1, ESR1 (dimethylated on arginine) and FAK (PubMed:14739300). Interacts (via SH2 and SH3 domain) with TNK2 (By similarity). Interacts (via protein kinase domain) with the tyrosine phosphorylated form of RUNX3 (via runt domain) (By similarity). Interacts with TRAF3 (via RING-type zinc finger domain) (By similarity). Interacts with RIGI, MAVS and TBK1 (By similarity). Interacts (via SH2 domain) with RACK1; the interaction is enhanced by tyrosine phosphorylation of RACK1 and inhibits SRC activity (By similarity). Interacts (via SH2 domain) with the 'Tyr-402' phosphorylated form of PTK2B/PYK2 (PubMed:14739300). Interacts (via SH2 domain) with FLT3 (tyrosine phosphorylated) (PubMed:16684964). Identified in a complex containing FGFR4, NCAM1, CDH2, PLCG1, FRS2, SRC, SHC1, GAP43 and CTTN (PubMed:11433297). Interacts with EPHB1; activates the MAPK/ERK cascade to regulate cell migration (PubMed:12925710). Interacts with ERBB2 and STAT1 (PubMed:7542762, PubMed:9344858). Interacts with PDGFRA (tyrosine phosphorylated) (PubMed:14644164). Interacts with CSF1R (PubMed:7681396). Interacts (via SH2 domain) with the 'Tyr-9' phosphorylated form of PDPK1 (By similarity). Interacts with DDR2 (By similarity). Interacts with AMOTL2; this interaction regulates the translocation of phosphorylated SRC to peripheral cell-matrix adhesion sites (By similarity). Interacts with DDR1 and DAB2 (PubMed:20093046). Interacts with TRAP1 (By similarity). Interacts with CBLC; the interaction is enhanced when SRC is phosphorylated at 'Tyr-424' (By similarity). Interacts with ARHGEF5 (PubMed:21525037). Interacts (via cytoplasmic domain) with CEACAM1 (via SH2 domain); this interaction is regulated by trans-homophilic cell adhesion (By similarity). Interacts with MPP2 (By similarity). Interacts with PRR7 (By similarity). Interacts (via kinase domain and to a lesser extent the SH2 domain) directly with PDLIM4; this interaction results in PTPN13-mediated dephosphorylation of this protein leading to its inactivation (By similarity). Interacts with P85 (PIK3R1 or PIK3R2) (By similarity). Interacts with HNRNPA2B1 (PubMed:31320558). Interacts with IL6ST/gp130 (By similarity). Interacts (via SH3 domain) with PELP1 in the presence of 17-beta-estradiol (By similarity). Interacts with AMBRA1 (PubMed:28362576).</text>
</comment>
<comment type="interaction">
    <interactant intactId="EBI-298680">
        <id>P05480</id>
    </interactant>
    <interactant intactId="EBI-298707">
        <id>P31750</id>
        <label>Akt1</label>
    </interactant>
    <organismsDiffer>false</organismsDiffer>
    <experiments>3</experiments>
</comment>
<comment type="interaction">
    <interactant intactId="EBI-298680">
        <id>P05480</id>
    </interactant>
    <interactant intactId="EBI-777188">
        <id>P07141</id>
        <label>Csf1</label>
    </interactant>
    <organismsDiffer>false</organismsDiffer>
    <experiments>2</experiments>
</comment>
<comment type="interaction">
    <interactant intactId="EBI-298680">
        <id>P05480</id>
    </interactant>
    <interactant intactId="EBI-537711">
        <id>P54763</id>
        <label>Ephb2</label>
    </interactant>
    <organismsDiffer>false</organismsDiffer>
    <experiments>3</experiments>
</comment>
<comment type="interaction">
    <interactant intactId="EBI-298680">
        <id>P05480</id>
    </interactant>
    <interactant intactId="EBI-298630">
        <id>P23242</id>
        <label>Gja1</label>
    </interactant>
    <organismsDiffer>false</organismsDiffer>
    <experiments>3</experiments>
</comment>
<comment type="interaction">
    <interactant intactId="EBI-298680">
        <id>P05480</id>
    </interactant>
    <interactant intactId="EBI-6597520">
        <id>P18052</id>
        <label>Ptpra</label>
    </interactant>
    <organismsDiffer>false</organismsDiffer>
    <experiments>2</experiments>
</comment>
<comment type="interaction">
    <interactant intactId="EBI-298680">
        <id>P05480</id>
    </interactant>
    <interactant intactId="EBI-644195">
        <id>P70315</id>
        <label>Was</label>
    </interactant>
    <organismsDiffer>false</organismsDiffer>
    <experiments>2</experiments>
</comment>
<comment type="interaction">
    <interactant intactId="EBI-298680">
        <id>P05480</id>
    </interactant>
    <interactant intactId="EBI-375655">
        <id>P31016</id>
        <label>Dlg4</label>
    </interactant>
    <organismsDiffer>true</organismsDiffer>
    <experiments>9</experiments>
</comment>
<comment type="interaction">
    <interactant intactId="EBI-298680">
        <id>P05480</id>
    </interactant>
    <interactant intactId="EBI-466810">
        <id>Q8T4F7</id>
        <label>ena</label>
    </interactant>
    <organismsDiffer>true</organismsDiffer>
    <experiments>2</experiments>
</comment>
<comment type="interaction">
    <interactant intactId="EBI-298680">
        <id>P05480</id>
    </interactant>
    <interactant intactId="EBI-630970">
        <id>Q00959</id>
        <label>Grin2a</label>
    </interactant>
    <organismsDiffer>true</organismsDiffer>
    <experiments>4</experiments>
</comment>
<comment type="interaction">
    <interactant intactId="EBI-298680">
        <id>P05480</id>
    </interactant>
    <interactant intactId="EBI-713162">
        <id>P19367</id>
        <label>HK1</label>
    </interactant>
    <organismsDiffer>true</organismsDiffer>
    <experiments>8</experiments>
</comment>
<comment type="interaction">
    <interactant intactId="EBI-298680">
        <id>P05480</id>
    </interactant>
    <interactant intactId="EBI-741469">
        <id>P52789</id>
        <label>HK2</label>
    </interactant>
    <organismsDiffer>true</organismsDiffer>
    <experiments>4</experiments>
</comment>
<comment type="interaction">
    <interactant intactId="EBI-298680">
        <id>P05480</id>
    </interactant>
    <interactant intactId="EBI-702142">
        <id>Q05397</id>
        <label>PTK2</label>
    </interactant>
    <organismsDiffer>true</organismsDiffer>
    <experiments>5</experiments>
</comment>
<comment type="interaction">
    <interactant intactId="EBI-298680">
        <id>P05480</id>
    </interactant>
    <interactant intactId="EBI-6082337">
        <id>Q01973</id>
        <label>ROR1</label>
    </interactant>
    <organismsDiffer>true</organismsDiffer>
    <experiments>2</experiments>
</comment>
<comment type="interaction">
    <interactant intactId="EBI-298680">
        <id>P05480</id>
    </interactant>
    <interactant intactId="EBI-15563545">
        <id>Q13507-3</id>
        <label>TRPC3</label>
    </interactant>
    <organismsDiffer>true</organismsDiffer>
    <experiments>4</experiments>
</comment>
<comment type="interaction">
    <interactant intactId="EBI-26656723">
        <id>P05480-2</id>
    </interactant>
    <interactant intactId="EBI-702847">
        <id>P05106</id>
        <label>ITGB3</label>
    </interactant>
    <organismsDiffer>true</organismsDiffer>
    <experiments>4</experiments>
</comment>
<comment type="subcellular location">
    <subcellularLocation>
        <location evidence="11 19">Cell membrane</location>
        <topology evidence="20">Lipid-anchor</topology>
    </subcellularLocation>
    <subcellularLocation>
        <location evidence="11">Mitochondrion inner membrane</location>
    </subcellularLocation>
    <subcellularLocation>
        <location evidence="11">Nucleus</location>
    </subcellularLocation>
    <subcellularLocation>
        <location evidence="11">Cytoplasm</location>
        <location evidence="11">Cytoskeleton</location>
    </subcellularLocation>
    <subcellularLocation>
        <location evidence="3">Cytoplasm</location>
        <location evidence="3">Perinuclear region</location>
    </subcellularLocation>
    <subcellularLocation>
        <location evidence="20">Cell junction</location>
        <location evidence="20">Focal adhesion</location>
    </subcellularLocation>
    <subcellularLocation>
        <location evidence="3">Cell junction</location>
    </subcellularLocation>
    <text evidence="3 20">Localizes to focal adhesion sites following integrin engagement (PubMed:22801373). Localization to focal adhesion sites requires myristoylation and the SH3 domain. Colocalizes with PDLIM4 at the perinuclear region, but not at focal adhesions.</text>
</comment>
<comment type="alternative products">
    <event type="alternative splicing"/>
    <isoform>
        <id>P05480-2</id>
        <name>1</name>
        <name evidence="4">c-Src</name>
        <sequence type="displayed"/>
    </isoform>
    <isoform>
        <id>P05480-1</id>
        <name>2</name>
        <name evidence="4">N1-Src</name>
        <sequence type="described" ref="VSP_060883"/>
    </isoform>
</comment>
<comment type="PTM">
    <text evidence="1">Myristoylated at Gly-2, and this is essential for targeting to membranes.</text>
</comment>
<comment type="PTM">
    <text evidence="1 21">Dephosphorylated at Tyr-529 by PTPRJ (By similarity). Phosphorylated on Tyr-529 by c-Src kinase (CSK). The phosphorylated form is termed pp60c-src. Dephosphorylated by PTPRJ at Tyr-418. Normally maintained in an inactive conformation with the SH2 domain engaged with Tyr-529, the SH3 domain engaged with the SH2-kinase linker, and Tyr-418 dephosphorylated. Dephosphorylation of Tyr-529 as a result of protein tyrosine phosphatase (PTP) action disrupts the intramolecular interaction between the SH2 domain and Tyr-529, Tyr-418 can then become autophosphorylated, resulting in SRC activation. Phosphorylation of Tyr-529 by CSK allows this interaction to reform, resulting in SRC inactivation. CDK5-mediated phosphorylation at Ser-74 targets SRC to ubiquitin-dependent degradation and thus leads to cytoskeletal reorganization. Phosphorylated by PTK2/FAK1; this enhances kinase activity. Phosphorylated by PTK2B/PYK2; this enhances kinase activity (By similarity). Upon activation of IL6ST by IL6, Tyr-418 is phosphorylated and Tyr-529 dephosphorylated (PubMed:25731159).</text>
</comment>
<comment type="PTM">
    <molecule>Isoform 1</molecule>
    <text evidence="4">Displays reduced levels of autophosphorylation at Tyr-418 compared to isoform 2.</text>
</comment>
<comment type="PTM">
    <molecule>Isoform 2</molecule>
    <text evidence="4">Displays enhanced levels of autophosphorylation at Tyr-418 compared to isoform 1.</text>
</comment>
<comment type="PTM">
    <text evidence="1">S-nitrosylation is important for activation of its kinase activity.</text>
</comment>
<comment type="PTM">
    <text evidence="1">Ubiquitinated in response to CDK5-mediated phosphorylation. Ubiquitination mediated by CBLC requires SRC autophosphorylation at Tyr-418 and may lead to lysosomal degradation (By similarity).</text>
</comment>
<comment type="similarity">
    <text evidence="5">Belongs to the protein kinase superfamily. Tyr protein kinase family. SRC subfamily.</text>
</comment>
<evidence type="ECO:0000250" key="1"/>
<evidence type="ECO:0000250" key="2">
    <source>
        <dbReference type="UniProtKB" id="P00523"/>
    </source>
</evidence>
<evidence type="ECO:0000250" key="3">
    <source>
        <dbReference type="UniProtKB" id="P12931"/>
    </source>
</evidence>
<evidence type="ECO:0000250" key="4">
    <source>
        <dbReference type="UniProtKB" id="Q9WUD9"/>
    </source>
</evidence>
<evidence type="ECO:0000255" key="5">
    <source>
        <dbReference type="PROSITE-ProRule" id="PRU00159"/>
    </source>
</evidence>
<evidence type="ECO:0000255" key="6">
    <source>
        <dbReference type="PROSITE-ProRule" id="PRU00191"/>
    </source>
</evidence>
<evidence type="ECO:0000255" key="7">
    <source>
        <dbReference type="PROSITE-ProRule" id="PRU00192"/>
    </source>
</evidence>
<evidence type="ECO:0000255" key="8">
    <source>
        <dbReference type="PROSITE-ProRule" id="PRU10028"/>
    </source>
</evidence>
<evidence type="ECO:0000256" key="9">
    <source>
        <dbReference type="SAM" id="MobiDB-lite"/>
    </source>
</evidence>
<evidence type="ECO:0000269" key="10">
    <source>
    </source>
</evidence>
<evidence type="ECO:0000269" key="11">
    <source>
    </source>
</evidence>
<evidence type="ECO:0000269" key="12">
    <source>
    </source>
</evidence>
<evidence type="ECO:0000269" key="13">
    <source>
    </source>
</evidence>
<evidence type="ECO:0000269" key="14">
    <source>
    </source>
</evidence>
<evidence type="ECO:0000269" key="15">
    <source>
    </source>
</evidence>
<evidence type="ECO:0000269" key="16">
    <source>
    </source>
</evidence>
<evidence type="ECO:0000269" key="17">
    <source>
    </source>
</evidence>
<evidence type="ECO:0000269" key="18">
    <source>
    </source>
</evidence>
<evidence type="ECO:0000269" key="19">
    <source>
    </source>
</evidence>
<evidence type="ECO:0000269" key="20">
    <source>
    </source>
</evidence>
<evidence type="ECO:0000269" key="21">
    <source>
    </source>
</evidence>
<evidence type="ECO:0000269" key="22">
    <source>
    </source>
</evidence>
<evidence type="ECO:0000269" key="23">
    <source>
    </source>
</evidence>
<evidence type="ECO:0000269" key="24">
    <source>
    </source>
</evidence>
<evidence type="ECO:0000269" key="25">
    <source>
    </source>
</evidence>
<evidence type="ECO:0000269" key="26">
    <source>
    </source>
</evidence>
<evidence type="ECO:0000269" key="27">
    <source>
    </source>
</evidence>
<evidence type="ECO:0000269" key="28">
    <source>
    </source>
</evidence>
<evidence type="ECO:0000269" key="29">
    <source>
    </source>
</evidence>
<evidence type="ECO:0000305" key="30"/>
<evidence type="ECO:0000305" key="31">
    <source>
    </source>
</evidence>
<evidence type="ECO:0000305" key="32">
    <source>
    </source>
</evidence>
<evidence type="ECO:0000305" key="33">
    <source>
    </source>
</evidence>
<evidence type="ECO:0000312" key="34">
    <source>
        <dbReference type="MGI" id="MGI:98397"/>
    </source>
</evidence>
<evidence type="ECO:0007744" key="35">
    <source>
    </source>
</evidence>
<evidence type="ECO:0007744" key="36">
    <source>
    </source>
</evidence>
<evidence type="ECO:0007829" key="37">
    <source>
        <dbReference type="PDB" id="6F3F"/>
    </source>
</evidence>
<evidence type="ECO:0007829" key="38">
    <source>
        <dbReference type="PDB" id="8XN8"/>
    </source>
</evidence>
<feature type="initiator methionine" description="Removed" evidence="3">
    <location>
        <position position="1"/>
    </location>
</feature>
<feature type="chain" id="PRO_0000088142" description="Proto-oncogene tyrosine-protein kinase Src">
    <location>
        <begin position="2"/>
        <end position="535"/>
    </location>
</feature>
<feature type="domain" description="SH3" evidence="7">
    <location>
        <begin position="83"/>
        <end position="144"/>
    </location>
</feature>
<feature type="domain" description="SH2" evidence="6">
    <location>
        <begin position="150"/>
        <end position="247"/>
    </location>
</feature>
<feature type="domain" description="Protein kinase" evidence="5">
    <location>
        <begin position="269"/>
        <end position="522"/>
    </location>
</feature>
<feature type="region of interest" description="Disordered" evidence="9">
    <location>
        <begin position="1"/>
        <end position="56"/>
    </location>
</feature>
<feature type="compositionally biased region" description="Basic and acidic residues" evidence="9">
    <location>
        <begin position="7"/>
        <end position="19"/>
    </location>
</feature>
<feature type="active site" description="Proton acceptor" evidence="5 8">
    <location>
        <position position="388"/>
    </location>
</feature>
<feature type="binding site" evidence="5">
    <location>
        <begin position="275"/>
        <end position="283"/>
    </location>
    <ligand>
        <name>ATP</name>
        <dbReference type="ChEBI" id="CHEBI:30616"/>
    </ligand>
</feature>
<feature type="binding site" evidence="5">
    <location>
        <position position="297"/>
    </location>
    <ligand>
        <name>ATP</name>
        <dbReference type="ChEBI" id="CHEBI:30616"/>
    </ligand>
</feature>
<feature type="modified residue" description="Phosphoserine" evidence="36">
    <location>
        <position position="17"/>
    </location>
</feature>
<feature type="modified residue" description="Phosphoserine" evidence="36">
    <location>
        <position position="21"/>
    </location>
</feature>
<feature type="modified residue" description="Phosphoserine" evidence="36">
    <location>
        <position position="74"/>
    </location>
</feature>
<feature type="modified residue" description="Phosphotyrosine" evidence="35">
    <location>
        <position position="186"/>
    </location>
</feature>
<feature type="modified residue" description="Phosphotyrosine; by autocatalysis" evidence="20 21">
    <location>
        <position position="418"/>
    </location>
</feature>
<feature type="modified residue" description="Phosphotyrosine; by FAK2" evidence="20">
    <location>
        <position position="418"/>
    </location>
</feature>
<feature type="modified residue" description="Phosphotyrosine; by CSK" evidence="20 21">
    <location>
        <position position="529"/>
    </location>
</feature>
<feature type="lipid moiety-binding region" description="N-myristoyl glycine" evidence="1">
    <location>
        <position position="2"/>
    </location>
</feature>
<feature type="splice variant" id="VSP_060883" description="In isoform 2.">
    <original>T</original>
    <variation>TRKVDVR</variation>
    <location>
        <position position="116"/>
    </location>
</feature>
<feature type="sequence conflict" description="In Ref. 1; AAA40135." evidence="30" ref="1">
    <original>P</original>
    <variation>A</variation>
    <location>
        <position position="80"/>
    </location>
</feature>
<feature type="strand" evidence="38">
    <location>
        <begin position="88"/>
        <end position="92"/>
    </location>
</feature>
<feature type="strand" evidence="38">
    <location>
        <begin position="98"/>
        <end position="101"/>
    </location>
</feature>
<feature type="strand" evidence="38">
    <location>
        <begin position="109"/>
        <end position="113"/>
    </location>
</feature>
<feature type="strand" evidence="38">
    <location>
        <begin position="117"/>
        <end position="125"/>
    </location>
</feature>
<feature type="turn" evidence="38">
    <location>
        <begin position="126"/>
        <end position="128"/>
    </location>
</feature>
<feature type="strand" evidence="38">
    <location>
        <begin position="131"/>
        <end position="135"/>
    </location>
</feature>
<feature type="helix" evidence="38">
    <location>
        <begin position="136"/>
        <end position="138"/>
    </location>
</feature>
<feature type="strand" evidence="38">
    <location>
        <begin position="139"/>
        <end position="141"/>
    </location>
</feature>
<feature type="helix" evidence="38">
    <location>
        <begin position="145"/>
        <end position="147"/>
    </location>
</feature>
<feature type="helix" evidence="38">
    <location>
        <begin position="157"/>
        <end position="164"/>
    </location>
</feature>
<feature type="strand" evidence="38">
    <location>
        <begin position="173"/>
        <end position="178"/>
    </location>
</feature>
<feature type="strand" evidence="38">
    <location>
        <begin position="180"/>
        <end position="182"/>
    </location>
</feature>
<feature type="strand" evidence="38">
    <location>
        <begin position="186"/>
        <end position="194"/>
    </location>
</feature>
<feature type="turn" evidence="38">
    <location>
        <begin position="195"/>
        <end position="197"/>
    </location>
</feature>
<feature type="strand" evidence="38">
    <location>
        <begin position="198"/>
        <end position="208"/>
    </location>
</feature>
<feature type="strand" evidence="38">
    <location>
        <begin position="214"/>
        <end position="217"/>
    </location>
</feature>
<feature type="strand" evidence="38">
    <location>
        <begin position="220"/>
        <end position="224"/>
    </location>
</feature>
<feature type="helix" evidence="38">
    <location>
        <begin position="225"/>
        <end position="232"/>
    </location>
</feature>
<feature type="strand" evidence="38">
    <location>
        <begin position="239"/>
        <end position="241"/>
    </location>
</feature>
<feature type="strand" evidence="38">
    <location>
        <begin position="255"/>
        <end position="258"/>
    </location>
</feature>
<feature type="helix" evidence="38">
    <location>
        <begin position="266"/>
        <end position="268"/>
    </location>
</feature>
<feature type="strand" evidence="38">
    <location>
        <begin position="269"/>
        <end position="277"/>
    </location>
</feature>
<feature type="strand" evidence="38">
    <location>
        <begin position="279"/>
        <end position="288"/>
    </location>
</feature>
<feature type="turn" evidence="38">
    <location>
        <begin position="289"/>
        <end position="291"/>
    </location>
</feature>
<feature type="strand" evidence="38">
    <location>
        <begin position="292"/>
        <end position="299"/>
    </location>
</feature>
<feature type="helix" evidence="38">
    <location>
        <begin position="306"/>
        <end position="317"/>
    </location>
</feature>
<feature type="strand" evidence="38">
    <location>
        <begin position="327"/>
        <end position="331"/>
    </location>
</feature>
<feature type="strand" evidence="38">
    <location>
        <begin position="333"/>
        <end position="335"/>
    </location>
</feature>
<feature type="strand" evidence="38">
    <location>
        <begin position="337"/>
        <end position="340"/>
    </location>
</feature>
<feature type="helix" evidence="38">
    <location>
        <begin position="348"/>
        <end position="352"/>
    </location>
</feature>
<feature type="helix" evidence="38">
    <location>
        <begin position="357"/>
        <end position="359"/>
    </location>
</feature>
<feature type="helix" evidence="38">
    <location>
        <begin position="362"/>
        <end position="381"/>
    </location>
</feature>
<feature type="helix" evidence="38">
    <location>
        <begin position="391"/>
        <end position="393"/>
    </location>
</feature>
<feature type="strand" evidence="38">
    <location>
        <begin position="394"/>
        <end position="396"/>
    </location>
</feature>
<feature type="helix" evidence="38">
    <location>
        <begin position="398"/>
        <end position="400"/>
    </location>
</feature>
<feature type="strand" evidence="38">
    <location>
        <begin position="402"/>
        <end position="404"/>
    </location>
</feature>
<feature type="helix" evidence="38">
    <location>
        <begin position="409"/>
        <end position="412"/>
    </location>
</feature>
<feature type="helix" evidence="38">
    <location>
        <begin position="416"/>
        <end position="419"/>
    </location>
</feature>
<feature type="helix" evidence="38">
    <location>
        <begin position="428"/>
        <end position="430"/>
    </location>
</feature>
<feature type="helix" evidence="38">
    <location>
        <begin position="433"/>
        <end position="438"/>
    </location>
</feature>
<feature type="helix" evidence="38">
    <location>
        <begin position="443"/>
        <end position="458"/>
    </location>
</feature>
<feature type="turn" evidence="38">
    <location>
        <begin position="459"/>
        <end position="461"/>
    </location>
</feature>
<feature type="helix" evidence="38">
    <location>
        <begin position="470"/>
        <end position="478"/>
    </location>
</feature>
<feature type="helix" evidence="38">
    <location>
        <begin position="491"/>
        <end position="500"/>
    </location>
</feature>
<feature type="helix" evidence="38">
    <location>
        <begin position="505"/>
        <end position="507"/>
    </location>
</feature>
<feature type="helix" evidence="38">
    <location>
        <begin position="511"/>
        <end position="519"/>
    </location>
</feature>
<feature type="turn" evidence="37">
    <location>
        <begin position="520"/>
        <end position="522"/>
    </location>
</feature>
<feature type="strand" evidence="38">
    <location>
        <begin position="528"/>
        <end position="530"/>
    </location>
</feature>
<proteinExistence type="evidence at protein level"/>
<keyword id="KW-0002">3D-structure</keyword>
<keyword id="KW-0025">Alternative splicing</keyword>
<keyword id="KW-0067">ATP-binding</keyword>
<keyword id="KW-0130">Cell adhesion</keyword>
<keyword id="KW-0131">Cell cycle</keyword>
<keyword id="KW-0965">Cell junction</keyword>
<keyword id="KW-1003">Cell membrane</keyword>
<keyword id="KW-0963">Cytoplasm</keyword>
<keyword id="KW-0206">Cytoskeleton</keyword>
<keyword id="KW-0391">Immunity</keyword>
<keyword id="KW-0418">Kinase</keyword>
<keyword id="KW-0449">Lipoprotein</keyword>
<keyword id="KW-0472">Membrane</keyword>
<keyword id="KW-0496">Mitochondrion</keyword>
<keyword id="KW-0999">Mitochondrion inner membrane</keyword>
<keyword id="KW-0519">Myristate</keyword>
<keyword id="KW-0547">Nucleotide-binding</keyword>
<keyword id="KW-0539">Nucleus</keyword>
<keyword id="KW-0597">Phosphoprotein</keyword>
<keyword id="KW-0656">Proto-oncogene</keyword>
<keyword id="KW-1185">Reference proteome</keyword>
<keyword id="KW-0727">SH2 domain</keyword>
<keyword id="KW-0728">SH3 domain</keyword>
<keyword id="KW-0808">Transferase</keyword>
<keyword id="KW-0829">Tyrosine-protein kinase</keyword>
<keyword id="KW-0832">Ubl conjugation</keyword>
<protein>
    <recommendedName>
        <fullName evidence="30">Proto-oncogene tyrosine-protein kinase Src</fullName>
        <ecNumber evidence="27">2.7.10.2</ecNumber>
    </recommendedName>
    <alternativeName>
        <fullName>Proto-oncogene c-Src</fullName>
    </alternativeName>
    <alternativeName>
        <fullName>pp60c-src</fullName>
        <shortName>p60-Src</shortName>
    </alternativeName>
</protein>